<dbReference type="EMBL" id="AY582139">
    <property type="protein sequence ID" value="AAT98552.1"/>
    <property type="molecule type" value="Genomic_DNA"/>
</dbReference>
<dbReference type="EMBL" id="AY582139">
    <property type="protein sequence ID" value="AAT98573.1"/>
    <property type="molecule type" value="Genomic_DNA"/>
</dbReference>
<dbReference type="GO" id="GO:0009570">
    <property type="term" value="C:chloroplast stroma"/>
    <property type="evidence" value="ECO:0007669"/>
    <property type="project" value="UniProtKB-SubCell"/>
</dbReference>
<dbReference type="GO" id="GO:0005524">
    <property type="term" value="F:ATP binding"/>
    <property type="evidence" value="ECO:0007669"/>
    <property type="project" value="UniProtKB-KW"/>
</dbReference>
<dbReference type="GO" id="GO:0016887">
    <property type="term" value="F:ATP hydrolysis activity"/>
    <property type="evidence" value="ECO:0007669"/>
    <property type="project" value="InterPro"/>
</dbReference>
<dbReference type="CDD" id="cd19505">
    <property type="entry name" value="RecA-like_Ycf2"/>
    <property type="match status" value="1"/>
</dbReference>
<dbReference type="Gene3D" id="3.40.50.300">
    <property type="entry name" value="P-loop containing nucleotide triphosphate hydrolases"/>
    <property type="match status" value="1"/>
</dbReference>
<dbReference type="HAMAP" id="MF_01330">
    <property type="entry name" value="Ycf2"/>
    <property type="match status" value="1"/>
</dbReference>
<dbReference type="InterPro" id="IPR003593">
    <property type="entry name" value="AAA+_ATPase"/>
</dbReference>
<dbReference type="InterPro" id="IPR003959">
    <property type="entry name" value="ATPase_AAA_core"/>
</dbReference>
<dbReference type="InterPro" id="IPR027417">
    <property type="entry name" value="P-loop_NTPase"/>
</dbReference>
<dbReference type="InterPro" id="IPR008543">
    <property type="entry name" value="Uncharacterised_Ycf2"/>
</dbReference>
<dbReference type="InterPro" id="IPR056777">
    <property type="entry name" value="Ycf2_N"/>
</dbReference>
<dbReference type="PANTHER" id="PTHR33078:SF89">
    <property type="entry name" value="PROTEIN YCF2"/>
    <property type="match status" value="1"/>
</dbReference>
<dbReference type="PANTHER" id="PTHR33078">
    <property type="entry name" value="PROTEIN YCF2-RELATED"/>
    <property type="match status" value="1"/>
</dbReference>
<dbReference type="Pfam" id="PF00004">
    <property type="entry name" value="AAA"/>
    <property type="match status" value="1"/>
</dbReference>
<dbReference type="Pfam" id="PF05695">
    <property type="entry name" value="Ycf2"/>
    <property type="match status" value="2"/>
</dbReference>
<dbReference type="SMART" id="SM00382">
    <property type="entry name" value="AAA"/>
    <property type="match status" value="1"/>
</dbReference>
<dbReference type="SUPFAM" id="SSF52540">
    <property type="entry name" value="P-loop containing nucleoside triphosphate hydrolases"/>
    <property type="match status" value="1"/>
</dbReference>
<geneLocation type="chloroplast"/>
<organism>
    <name type="scientific">Panax ginseng</name>
    <name type="common">Korean ginseng</name>
    <dbReference type="NCBI Taxonomy" id="4054"/>
    <lineage>
        <taxon>Eukaryota</taxon>
        <taxon>Viridiplantae</taxon>
        <taxon>Streptophyta</taxon>
        <taxon>Embryophyta</taxon>
        <taxon>Tracheophyta</taxon>
        <taxon>Spermatophyta</taxon>
        <taxon>Magnoliopsida</taxon>
        <taxon>eudicotyledons</taxon>
        <taxon>Gunneridae</taxon>
        <taxon>Pentapetalae</taxon>
        <taxon>asterids</taxon>
        <taxon>campanulids</taxon>
        <taxon>Apiales</taxon>
        <taxon>Araliaceae</taxon>
        <taxon>Panax</taxon>
    </lineage>
</organism>
<gene>
    <name evidence="1" type="primary">ycf2-A</name>
    <name type="ORF">PSC0883</name>
</gene>
<gene>
    <name evidence="1" type="primary">ycf2-B</name>
    <name type="ORF">PSC1477</name>
</gene>
<comment type="function">
    <text>Probable ATPase of unknown function. Its presence in a non-photosynthetic plant (Epifagus virginiana) and experiments in tobacco indicate that it has an essential function which is probably not related to photosynthesis.</text>
</comment>
<comment type="subcellular location">
    <subcellularLocation>
        <location evidence="1">Plastid</location>
        <location evidence="1">Chloroplast stroma</location>
    </subcellularLocation>
</comment>
<comment type="similarity">
    <text evidence="1">Belongs to the Ycf2 family.</text>
</comment>
<proteinExistence type="inferred from homology"/>
<feature type="chain" id="PRO_0000223063" description="Protein Ycf2">
    <location>
        <begin position="1"/>
        <end position="2110"/>
    </location>
</feature>
<feature type="region of interest" description="Disordered" evidence="2">
    <location>
        <begin position="190"/>
        <end position="209"/>
    </location>
</feature>
<feature type="binding site" evidence="1">
    <location>
        <begin position="1442"/>
        <end position="1449"/>
    </location>
    <ligand>
        <name>ATP</name>
        <dbReference type="ChEBI" id="CHEBI:30616"/>
    </ligand>
</feature>
<keyword id="KW-0067">ATP-binding</keyword>
<keyword id="KW-0150">Chloroplast</keyword>
<keyword id="KW-0547">Nucleotide-binding</keyword>
<keyword id="KW-0934">Plastid</keyword>
<name>YCF2_PANGI</name>
<reference key="1">
    <citation type="journal article" date="2004" name="DNA Res.">
        <title>Complete chloroplast genome sequence from Korea ginseng (Panax schinseng Nees) and comparative analysis of sequence evolution among 17 vascular plants.</title>
        <authorList>
            <person name="Kim K.-J."/>
            <person name="Lee H.-L."/>
        </authorList>
    </citation>
    <scope>NUCLEOTIDE SEQUENCE [LARGE SCALE GENOMIC DNA]</scope>
</reference>
<sequence>MKGHQFKSWIFELREILREIKNSHYFLDSRTQFNSVGSFSHIFFHQERFIKLFDPRIWSILLSRNSQGSTSNRYFTIKGVILFVVAVLIYRINSRNMVERKNLYLIGLLPIPMNSIGPRNDTLEESVGSSNINRLIVSLLYLPKGKKISESCFLNPKESTWVLPITKKCSMPESNWGSRWWRNWIGKKRDSSQLKGSSDQSRDPLDSISNEDSEYHTLINQREIQQLKERSILWDPSFLQTERTEIESDRFPKCLSVYSSMSRLFTEREKQMINHLLPEEIEEFLGNPTRSVRSFFSDRWSELHLGSNPTERSTRDQKLLKKQQDLSFVPSRRSEKKEMVNIFKIITYLQNTVSIHPISSYPGCDMVPKDEPDMDSSNKISFLNKNPFFDLFHLFHDRNRGGYTLHHDFESEERFQEMADLFTLSITEPDLVYHKGFAFSIDSYGLDQKQFLNEVFDSRDESKKKYLLALPPFFYEENESFYRRIRKKWVRISCGNDLEDPKPKIVVFASNNIMEAVNQYRLIRNLIQIQYSTYGYIRNVLNRFFLMNRSDRNFEYGIQRDQIGKDTLNHRTIMKYTINQHFSNLKKSQKRWFDPLILISRTERSMNRDPDAYRYKWSNGSKNFQEHLEHFVSEQKSRFQVVFDRLRINQYSIDWSEVIDKKGLSKPFRFFLSKLLFFLSNSLPFFFVSFGNIPIHRSEIYIYELKGPNDQLCNQLLESIGLQIVHLKKWKPFLLDLLDDHDTSQKSKFLINGGTISPFLFNKIPKWMIDSFHTRNNRRKSFDNTDSYFSTIFHDQDNWLNPVKPFHRSSLISSFYKANRLRFLNNPHHFCFYCNKRFPFYVEKARINNSDFTYGQFLNILFIHNKIFSLCVGKKKHAFWGRDTISPIESQVSNIFIPNDFPQSGGDETYNLYKSFHFPSRSDPFVRRAIYSIADISGTPLTEGQIVNFERTYCQPLSDMNLSDSEGKNSHQYLNFNSNMGLIHTPCSEKYLPSEKRKKRSLCLKKCVEKGQMYRTFQRDSAFSTLSKWNLFQTYMPWFLTSTGYKYLNFIFLDTFSDLLPILSLSSSQKFVSIFHDIMHGSDISWRILQKKLCLLQWKWNLISEISSKCFHNLLLSEERIHRNNESPLISTHLRSPNVREFLYSILFLLLVAGYLVCTHLLFVSWASSELQTEFEKVKSLMIPSSMIELRKLLDRYPTSEPNSFWLKNLFLVALEQLGDSLEEIRGSASGGNMLLGGDPAYGVKSIRSKKKYLNINLIDIIDLISIIPNPINRITFSRNTRHLSHTSKEIYSLIRKRKNVNGDWIDDKIESWVANSDSIDDEEREFLVQFSTLTTEKRIDQILLSLTHSDHLSKNDSGYQMIEQPGAIYLRYLVDIHKKYLMNYEFNTSCLAERRIFLAHYQTITYSQTSCGANSLNFPSHGKPFSLRLALSPSRGILVIGSIGTGRSYLVKYLATNSYVPFITVFLNKFLDNKPKGFLIDDIDIDASDDIDASDDIDASDDIDASDDIDRDLHTELELLTMDMMPEIDRFYITLQFELAKAMSPCIIWIPNIHDLDVNESNYFSLGLLVNHLSRDCERCSTRNILVIASTHIPQKVDPALIAPNKLNTCIKIRRLLIPQQRKHFFTLSYTRGFRLENKMFHTNGFGSITMGSNARDLVALTNEALSISITQKKSIIDTNTIRSALHRQTWDLRSQVRSVQDHGILFYQIGRAVAQNVLLSNCPIDPISIYMKKKSCNEGDSYLYKWYFELGTSMKKLTILLYLLSCSAGSVAQDLWSLPRPDEKNGITSYGLVENDSDLVHGLLEVEGALVGSSRTEKDCSQFDNDRVTLLLRPEPRNPLDMMQNGSCSILDQRFLYEKNESEFEEGEGEGALDPQQIEEDLFNHIVWAPRIWRPWGFLFDCIERPNELGFPYWSRSFRGKRILYDEEDELQENDSEFLQSGTMQYQTRDRSSKEQGLFRISQFIWDPADPLFFLFKDQPFVSVFSHRELFADEEMSKGLLTSPTDPPTSIYKRWFIKKTQEKHFELLINRQRWFRTNSSLSNGSFRSNTLSESYQYLSNLFLSNGTLLDQMTKTLLRKRWLFPDEMKIGFMEQEKDFPFLSRKDMWP</sequence>
<accession>Q68RU4</accession>
<evidence type="ECO:0000255" key="1">
    <source>
        <dbReference type="HAMAP-Rule" id="MF_01330"/>
    </source>
</evidence>
<evidence type="ECO:0000256" key="2">
    <source>
        <dbReference type="SAM" id="MobiDB-lite"/>
    </source>
</evidence>
<protein>
    <recommendedName>
        <fullName evidence="1">Protein Ycf2</fullName>
    </recommendedName>
</protein>